<evidence type="ECO:0000255" key="1"/>
<evidence type="ECO:0000255" key="2">
    <source>
        <dbReference type="PROSITE-ProRule" id="PRU00143"/>
    </source>
</evidence>
<evidence type="ECO:0000255" key="3">
    <source>
        <dbReference type="PROSITE-ProRule" id="PRU10095"/>
    </source>
</evidence>
<evidence type="ECO:0000305" key="4"/>
<proteinExistence type="inferred from homology"/>
<organism>
    <name type="scientific">Lactococcus lactis subsp. lactis (strain IL1403)</name>
    <name type="common">Streptococcus lactis</name>
    <dbReference type="NCBI Taxonomy" id="272623"/>
    <lineage>
        <taxon>Bacteria</taxon>
        <taxon>Bacillati</taxon>
        <taxon>Bacillota</taxon>
        <taxon>Bacilli</taxon>
        <taxon>Lactobacillales</taxon>
        <taxon>Streptococcaceae</taxon>
        <taxon>Lactococcus</taxon>
    </lineage>
</organism>
<name>Y2128_LACLA</name>
<keyword id="KW-1003">Cell membrane</keyword>
<keyword id="KW-0378">Hydrolase</keyword>
<keyword id="KW-0472">Membrane</keyword>
<keyword id="KW-0479">Metal-binding</keyword>
<keyword id="KW-0482">Metalloprotease</keyword>
<keyword id="KW-0645">Protease</keyword>
<keyword id="KW-1185">Reference proteome</keyword>
<keyword id="KW-0812">Transmembrane</keyword>
<keyword id="KW-1133">Transmembrane helix</keyword>
<keyword id="KW-0862">Zinc</keyword>
<reference key="1">
    <citation type="journal article" date="2001" name="Genome Res.">
        <title>The complete genome sequence of the lactic acid bacterium Lactococcus lactis ssp. lactis IL1403.</title>
        <authorList>
            <person name="Bolotin A."/>
            <person name="Wincker P."/>
            <person name="Mauger S."/>
            <person name="Jaillon O."/>
            <person name="Malarme K."/>
            <person name="Weissenbach J."/>
            <person name="Ehrlich S.D."/>
            <person name="Sorokin A."/>
        </authorList>
    </citation>
    <scope>NUCLEOTIDE SEQUENCE [LARGE SCALE GENOMIC DNA]</scope>
    <source>
        <strain>IL1403</strain>
    </source>
</reference>
<gene>
    <name type="ordered locus">LL2128</name>
    <name type="ORF">L181494</name>
</gene>
<comment type="cofactor">
    <cofactor evidence="4">
        <name>Zn(2+)</name>
        <dbReference type="ChEBI" id="CHEBI:29105"/>
    </cofactor>
</comment>
<comment type="subcellular location">
    <subcellularLocation>
        <location evidence="4">Cell membrane</location>
        <topology evidence="4">Multi-pass membrane protein</topology>
    </subcellularLocation>
</comment>
<comment type="similarity">
    <text evidence="4">Belongs to the peptidase M50B family.</text>
</comment>
<sequence length="428" mass="46423">MIETLITFIIIFGIIVAIHEYGHLWWAKRSGILVREYAVGMGPKIFAHQAKDGTLYTIRILPLGGYVRLAGWGDDKTEIKKGQAASLVVSKSEVVNPEAENSVSNIVRRINLSEHVELEEAIPMLITEYDFEKELFIEGEVFGEIKRYSVDHDATIIEEDGTEVRIAPLDVQYQSAGVFHKMLTNFGGPLNNFILGIIAFIVLTFVQGGVPSTTNAIGQVEKGTPAYNAGLKAGDKIEAVNGTKTADWNNVVTEISGSKGKELKLEVSRSGKSETLSVTPKKMDGSYRVGIMQSMKTGFFDKITGGFVQAGQSATAIFKALGSLIARPSLDKLGGPVAIYQLSGQAARAGFPAIVYLLAMLSINLGIVNLFPIPVLDGGKIVLNIIEAIRGKALSQEKESIITMVGVVFMLVLFVAVTWNDILRAFVN</sequence>
<feature type="chain" id="PRO_0000088445" description="Putative zinc metalloprotease LL2128">
    <location>
        <begin position="1"/>
        <end position="428"/>
    </location>
</feature>
<feature type="transmembrane region" description="Helical" evidence="1">
    <location>
        <begin position="188"/>
        <end position="210"/>
    </location>
</feature>
<feature type="transmembrane region" description="Helical" evidence="1">
    <location>
        <begin position="354"/>
        <end position="376"/>
    </location>
</feature>
<feature type="transmembrane region" description="Helical" evidence="1">
    <location>
        <begin position="401"/>
        <end position="423"/>
    </location>
</feature>
<feature type="domain" description="PDZ" evidence="2">
    <location>
        <begin position="188"/>
        <end position="282"/>
    </location>
</feature>
<feature type="active site" evidence="3">
    <location>
        <position position="20"/>
    </location>
</feature>
<feature type="binding site" evidence="3">
    <location>
        <position position="19"/>
    </location>
    <ligand>
        <name>Zn(2+)</name>
        <dbReference type="ChEBI" id="CHEBI:29105"/>
        <note>catalytic</note>
    </ligand>
</feature>
<feature type="binding site" evidence="3">
    <location>
        <position position="23"/>
    </location>
    <ligand>
        <name>Zn(2+)</name>
        <dbReference type="ChEBI" id="CHEBI:29105"/>
        <note>catalytic</note>
    </ligand>
</feature>
<accession>Q9CDT3</accession>
<dbReference type="EC" id="3.4.24.-"/>
<dbReference type="EMBL" id="AE005176">
    <property type="protein sequence ID" value="AAK06226.1"/>
    <property type="molecule type" value="Genomic_DNA"/>
</dbReference>
<dbReference type="PIR" id="H86890">
    <property type="entry name" value="H86890"/>
</dbReference>
<dbReference type="RefSeq" id="NP_268285.1">
    <property type="nucleotide sequence ID" value="NC_002662.1"/>
</dbReference>
<dbReference type="SMR" id="Q9CDT3"/>
<dbReference type="PaxDb" id="272623-L181494"/>
<dbReference type="DNASU" id="1115805"/>
<dbReference type="EnsemblBacteria" id="AAK06226">
    <property type="protein sequence ID" value="AAK06226"/>
    <property type="gene ID" value="L181494"/>
</dbReference>
<dbReference type="KEGG" id="lla:L181494"/>
<dbReference type="PATRIC" id="fig|272623.7.peg.2287"/>
<dbReference type="eggNOG" id="COG0750">
    <property type="taxonomic scope" value="Bacteria"/>
</dbReference>
<dbReference type="HOGENOM" id="CLU_025778_1_0_9"/>
<dbReference type="OrthoDB" id="9782003at2"/>
<dbReference type="Proteomes" id="UP000002196">
    <property type="component" value="Chromosome"/>
</dbReference>
<dbReference type="GO" id="GO:0005886">
    <property type="term" value="C:plasma membrane"/>
    <property type="evidence" value="ECO:0007669"/>
    <property type="project" value="UniProtKB-SubCell"/>
</dbReference>
<dbReference type="GO" id="GO:0046872">
    <property type="term" value="F:metal ion binding"/>
    <property type="evidence" value="ECO:0007669"/>
    <property type="project" value="UniProtKB-KW"/>
</dbReference>
<dbReference type="GO" id="GO:0004222">
    <property type="term" value="F:metalloendopeptidase activity"/>
    <property type="evidence" value="ECO:0007669"/>
    <property type="project" value="InterPro"/>
</dbReference>
<dbReference type="GO" id="GO:0006508">
    <property type="term" value="P:proteolysis"/>
    <property type="evidence" value="ECO:0007669"/>
    <property type="project" value="UniProtKB-KW"/>
</dbReference>
<dbReference type="CDD" id="cd23081">
    <property type="entry name" value="cpPDZ_EcRseP-like"/>
    <property type="match status" value="1"/>
</dbReference>
<dbReference type="CDD" id="cd06163">
    <property type="entry name" value="S2P-M50_PDZ_RseP-like"/>
    <property type="match status" value="1"/>
</dbReference>
<dbReference type="Gene3D" id="2.30.42.10">
    <property type="match status" value="1"/>
</dbReference>
<dbReference type="InterPro" id="IPR001478">
    <property type="entry name" value="PDZ"/>
</dbReference>
<dbReference type="InterPro" id="IPR041489">
    <property type="entry name" value="PDZ_6"/>
</dbReference>
<dbReference type="InterPro" id="IPR036034">
    <property type="entry name" value="PDZ_sf"/>
</dbReference>
<dbReference type="InterPro" id="IPR004387">
    <property type="entry name" value="Pept_M50_Zn"/>
</dbReference>
<dbReference type="InterPro" id="IPR008915">
    <property type="entry name" value="Peptidase_M50"/>
</dbReference>
<dbReference type="NCBIfam" id="TIGR00054">
    <property type="entry name" value="RIP metalloprotease RseP"/>
    <property type="match status" value="1"/>
</dbReference>
<dbReference type="PANTHER" id="PTHR42837:SF2">
    <property type="entry name" value="MEMBRANE METALLOPROTEASE ARASP2, CHLOROPLASTIC-RELATED"/>
    <property type="match status" value="1"/>
</dbReference>
<dbReference type="PANTHER" id="PTHR42837">
    <property type="entry name" value="REGULATOR OF SIGMA-E PROTEASE RSEP"/>
    <property type="match status" value="1"/>
</dbReference>
<dbReference type="Pfam" id="PF17820">
    <property type="entry name" value="PDZ_6"/>
    <property type="match status" value="1"/>
</dbReference>
<dbReference type="Pfam" id="PF02163">
    <property type="entry name" value="Peptidase_M50"/>
    <property type="match status" value="1"/>
</dbReference>
<dbReference type="SMART" id="SM00228">
    <property type="entry name" value="PDZ"/>
    <property type="match status" value="1"/>
</dbReference>
<dbReference type="SUPFAM" id="SSF50156">
    <property type="entry name" value="PDZ domain-like"/>
    <property type="match status" value="1"/>
</dbReference>
<dbReference type="PROSITE" id="PS50106">
    <property type="entry name" value="PDZ"/>
    <property type="match status" value="1"/>
</dbReference>
<dbReference type="PROSITE" id="PS00142">
    <property type="entry name" value="ZINC_PROTEASE"/>
    <property type="match status" value="1"/>
</dbReference>
<protein>
    <recommendedName>
        <fullName>Putative zinc metalloprotease LL2128</fullName>
        <ecNumber>3.4.24.-</ecNumber>
    </recommendedName>
</protein>